<name>BGLN_EMENI</name>
<accession>Q5B681</accession>
<accession>C8V626</accession>
<gene>
    <name type="primary">bglN</name>
    <name type="ORF">AN3949</name>
</gene>
<keyword id="KW-0119">Carbohydrate metabolism</keyword>
<keyword id="KW-0136">Cellulose degradation</keyword>
<keyword id="KW-0325">Glycoprotein</keyword>
<keyword id="KW-0326">Glycosidase</keyword>
<keyword id="KW-0378">Hydrolase</keyword>
<keyword id="KW-0624">Polysaccharide degradation</keyword>
<keyword id="KW-1185">Reference proteome</keyword>
<keyword id="KW-0964">Secreted</keyword>
<keyword id="KW-0732">Signal</keyword>
<reference key="1">
    <citation type="journal article" date="2005" name="Nature">
        <title>Sequencing of Aspergillus nidulans and comparative analysis with A. fumigatus and A. oryzae.</title>
        <authorList>
            <person name="Galagan J.E."/>
            <person name="Calvo S.E."/>
            <person name="Cuomo C."/>
            <person name="Ma L.-J."/>
            <person name="Wortman J.R."/>
            <person name="Batzoglou S."/>
            <person name="Lee S.-I."/>
            <person name="Bastuerkmen M."/>
            <person name="Spevak C.C."/>
            <person name="Clutterbuck J."/>
            <person name="Kapitonov V."/>
            <person name="Jurka J."/>
            <person name="Scazzocchio C."/>
            <person name="Farman M.L."/>
            <person name="Butler J."/>
            <person name="Purcell S."/>
            <person name="Harris S."/>
            <person name="Braus G.H."/>
            <person name="Draht O."/>
            <person name="Busch S."/>
            <person name="D'Enfert C."/>
            <person name="Bouchier C."/>
            <person name="Goldman G.H."/>
            <person name="Bell-Pedersen D."/>
            <person name="Griffiths-Jones S."/>
            <person name="Doonan J.H."/>
            <person name="Yu J."/>
            <person name="Vienken K."/>
            <person name="Pain A."/>
            <person name="Freitag M."/>
            <person name="Selker E.U."/>
            <person name="Archer D.B."/>
            <person name="Penalva M.A."/>
            <person name="Oakley B.R."/>
            <person name="Momany M."/>
            <person name="Tanaka T."/>
            <person name="Kumagai T."/>
            <person name="Asai K."/>
            <person name="Machida M."/>
            <person name="Nierman W.C."/>
            <person name="Denning D.W."/>
            <person name="Caddick M.X."/>
            <person name="Hynes M."/>
            <person name="Paoletti M."/>
            <person name="Fischer R."/>
            <person name="Miller B.L."/>
            <person name="Dyer P.S."/>
            <person name="Sachs M.S."/>
            <person name="Osmani S.A."/>
            <person name="Birren B.W."/>
        </authorList>
    </citation>
    <scope>NUCLEOTIDE SEQUENCE [LARGE SCALE GENOMIC DNA]</scope>
    <source>
        <strain>FGSC A4 / ATCC 38163 / CBS 112.46 / NRRL 194 / M139</strain>
    </source>
</reference>
<reference key="2">
    <citation type="journal article" date="2009" name="Fungal Genet. Biol.">
        <title>The 2008 update of the Aspergillus nidulans genome annotation: a community effort.</title>
        <authorList>
            <person name="Wortman J.R."/>
            <person name="Gilsenan J.M."/>
            <person name="Joardar V."/>
            <person name="Deegan J."/>
            <person name="Clutterbuck J."/>
            <person name="Andersen M.R."/>
            <person name="Archer D."/>
            <person name="Bencina M."/>
            <person name="Braus G."/>
            <person name="Coutinho P."/>
            <person name="von Dohren H."/>
            <person name="Doonan J."/>
            <person name="Driessen A.J."/>
            <person name="Durek P."/>
            <person name="Espeso E."/>
            <person name="Fekete E."/>
            <person name="Flipphi M."/>
            <person name="Estrada C.G."/>
            <person name="Geysens S."/>
            <person name="Goldman G."/>
            <person name="de Groot P.W."/>
            <person name="Hansen K."/>
            <person name="Harris S.D."/>
            <person name="Heinekamp T."/>
            <person name="Helmstaedt K."/>
            <person name="Henrissat B."/>
            <person name="Hofmann G."/>
            <person name="Homan T."/>
            <person name="Horio T."/>
            <person name="Horiuchi H."/>
            <person name="James S."/>
            <person name="Jones M."/>
            <person name="Karaffa L."/>
            <person name="Karanyi Z."/>
            <person name="Kato M."/>
            <person name="Keller N."/>
            <person name="Kelly D.E."/>
            <person name="Kiel J.A."/>
            <person name="Kim J.M."/>
            <person name="van der Klei I.J."/>
            <person name="Klis F.M."/>
            <person name="Kovalchuk A."/>
            <person name="Krasevec N."/>
            <person name="Kubicek C.P."/>
            <person name="Liu B."/>
            <person name="Maccabe A."/>
            <person name="Meyer V."/>
            <person name="Mirabito P."/>
            <person name="Miskei M."/>
            <person name="Mos M."/>
            <person name="Mullins J."/>
            <person name="Nelson D.R."/>
            <person name="Nielsen J."/>
            <person name="Oakley B.R."/>
            <person name="Osmani S.A."/>
            <person name="Pakula T."/>
            <person name="Paszewski A."/>
            <person name="Paulsen I."/>
            <person name="Pilsyk S."/>
            <person name="Pocsi I."/>
            <person name="Punt P.J."/>
            <person name="Ram A.F."/>
            <person name="Ren Q."/>
            <person name="Robellet X."/>
            <person name="Robson G."/>
            <person name="Seiboth B."/>
            <person name="van Solingen P."/>
            <person name="Specht T."/>
            <person name="Sun J."/>
            <person name="Taheri-Talesh N."/>
            <person name="Takeshita N."/>
            <person name="Ussery D."/>
            <person name="vanKuyk P.A."/>
            <person name="Visser H."/>
            <person name="van de Vondervoort P.J."/>
            <person name="de Vries R.P."/>
            <person name="Walton J."/>
            <person name="Xiang X."/>
            <person name="Xiong Y."/>
            <person name="Zeng A.P."/>
            <person name="Brandt B.W."/>
            <person name="Cornell M.J."/>
            <person name="van den Hondel C.A."/>
            <person name="Visser J."/>
            <person name="Oliver S.G."/>
            <person name="Turner G."/>
        </authorList>
    </citation>
    <scope>GENOME REANNOTATION</scope>
    <source>
        <strain>FGSC A4 / ATCC 38163 / CBS 112.46 / NRRL 194 / M139</strain>
    </source>
</reference>
<organism>
    <name type="scientific">Emericella nidulans (strain FGSC A4 / ATCC 38163 / CBS 112.46 / NRRL 194 / M139)</name>
    <name type="common">Aspergillus nidulans</name>
    <dbReference type="NCBI Taxonomy" id="227321"/>
    <lineage>
        <taxon>Eukaryota</taxon>
        <taxon>Fungi</taxon>
        <taxon>Dikarya</taxon>
        <taxon>Ascomycota</taxon>
        <taxon>Pezizomycotina</taxon>
        <taxon>Eurotiomycetes</taxon>
        <taxon>Eurotiomycetidae</taxon>
        <taxon>Eurotiales</taxon>
        <taxon>Aspergillaceae</taxon>
        <taxon>Aspergillus</taxon>
        <taxon>Aspergillus subgen. Nidulantes</taxon>
    </lineage>
</organism>
<dbReference type="EC" id="3.2.1.21"/>
<dbReference type="EMBL" id="AACD01000064">
    <property type="protein sequence ID" value="EAA59258.1"/>
    <property type="molecule type" value="Genomic_DNA"/>
</dbReference>
<dbReference type="EMBL" id="BN001302">
    <property type="protein sequence ID" value="CBF75028.1"/>
    <property type="molecule type" value="Genomic_DNA"/>
</dbReference>
<dbReference type="RefSeq" id="XP_661553.1">
    <property type="nucleotide sequence ID" value="XM_656461.1"/>
</dbReference>
<dbReference type="SMR" id="Q5B681"/>
<dbReference type="STRING" id="227321.Q5B681"/>
<dbReference type="CAZy" id="GH3">
    <property type="family name" value="Glycoside Hydrolase Family 3"/>
</dbReference>
<dbReference type="GlyCosmos" id="Q5B681">
    <property type="glycosylation" value="6 sites, No reported glycans"/>
</dbReference>
<dbReference type="EnsemblFungi" id="CBF75028">
    <property type="protein sequence ID" value="CBF75028"/>
    <property type="gene ID" value="ANIA_03949"/>
</dbReference>
<dbReference type="KEGG" id="ani:ANIA_03949"/>
<dbReference type="eggNOG" id="ENOG502QR4D">
    <property type="taxonomic scope" value="Eukaryota"/>
</dbReference>
<dbReference type="HOGENOM" id="CLU_004542_2_1_1"/>
<dbReference type="InParanoid" id="Q5B681"/>
<dbReference type="OMA" id="CENDHIM"/>
<dbReference type="OrthoDB" id="416222at2759"/>
<dbReference type="UniPathway" id="UPA00696"/>
<dbReference type="Proteomes" id="UP000000560">
    <property type="component" value="Chromosome II"/>
</dbReference>
<dbReference type="GO" id="GO:0005576">
    <property type="term" value="C:extracellular region"/>
    <property type="evidence" value="ECO:0007669"/>
    <property type="project" value="UniProtKB-SubCell"/>
</dbReference>
<dbReference type="GO" id="GO:0008422">
    <property type="term" value="F:beta-glucosidase activity"/>
    <property type="evidence" value="ECO:0000318"/>
    <property type="project" value="GO_Central"/>
</dbReference>
<dbReference type="GO" id="GO:0030245">
    <property type="term" value="P:cellulose catabolic process"/>
    <property type="evidence" value="ECO:0007669"/>
    <property type="project" value="UniProtKB-UniPathway"/>
</dbReference>
<dbReference type="GO" id="GO:0009251">
    <property type="term" value="P:glucan catabolic process"/>
    <property type="evidence" value="ECO:0000318"/>
    <property type="project" value="GO_Central"/>
</dbReference>
<dbReference type="FunFam" id="2.60.40.10:FF:000757">
    <property type="entry name" value="Beta-glucosidase G"/>
    <property type="match status" value="1"/>
</dbReference>
<dbReference type="FunFam" id="3.40.50.1700:FF:000021">
    <property type="entry name" value="Probable beta-glucosidase D"/>
    <property type="match status" value="1"/>
</dbReference>
<dbReference type="Gene3D" id="3.40.50.1700">
    <property type="entry name" value="Glycoside hydrolase family 3 C-terminal domain"/>
    <property type="match status" value="1"/>
</dbReference>
<dbReference type="Gene3D" id="3.20.20.300">
    <property type="entry name" value="Glycoside hydrolase, family 3, N-terminal domain"/>
    <property type="match status" value="1"/>
</dbReference>
<dbReference type="Gene3D" id="2.60.40.10">
    <property type="entry name" value="Immunoglobulins"/>
    <property type="match status" value="1"/>
</dbReference>
<dbReference type="InterPro" id="IPR050288">
    <property type="entry name" value="Cellulose_deg_GH3"/>
</dbReference>
<dbReference type="InterPro" id="IPR026891">
    <property type="entry name" value="Fn3-like"/>
</dbReference>
<dbReference type="InterPro" id="IPR002772">
    <property type="entry name" value="Glyco_hydro_3_C"/>
</dbReference>
<dbReference type="InterPro" id="IPR036881">
    <property type="entry name" value="Glyco_hydro_3_C_sf"/>
</dbReference>
<dbReference type="InterPro" id="IPR036962">
    <property type="entry name" value="Glyco_hydro_3_N_sf"/>
</dbReference>
<dbReference type="InterPro" id="IPR017853">
    <property type="entry name" value="Glycoside_hydrolase_SF"/>
</dbReference>
<dbReference type="InterPro" id="IPR013783">
    <property type="entry name" value="Ig-like_fold"/>
</dbReference>
<dbReference type="PANTHER" id="PTHR42715">
    <property type="entry name" value="BETA-GLUCOSIDASE"/>
    <property type="match status" value="1"/>
</dbReference>
<dbReference type="PANTHER" id="PTHR42715:SF5">
    <property type="entry name" value="BETA-GLUCOSIDASE M-RELATED"/>
    <property type="match status" value="1"/>
</dbReference>
<dbReference type="Pfam" id="PF14310">
    <property type="entry name" value="Fn3-like"/>
    <property type="match status" value="1"/>
</dbReference>
<dbReference type="Pfam" id="PF01915">
    <property type="entry name" value="Glyco_hydro_3_C"/>
    <property type="match status" value="2"/>
</dbReference>
<dbReference type="SMART" id="SM01217">
    <property type="entry name" value="Fn3_like"/>
    <property type="match status" value="1"/>
</dbReference>
<dbReference type="SUPFAM" id="SSF51445">
    <property type="entry name" value="(Trans)glycosidases"/>
    <property type="match status" value="1"/>
</dbReference>
<dbReference type="SUPFAM" id="SSF52279">
    <property type="entry name" value="Beta-D-glucan exohydrolase, C-terminal domain"/>
    <property type="match status" value="1"/>
</dbReference>
<protein>
    <recommendedName>
        <fullName>Probable beta-glucosidase N</fullName>
        <ecNumber>3.2.1.21</ecNumber>
    </recommendedName>
    <alternativeName>
        <fullName>Beta-D-glucoside glucohydrolase N</fullName>
    </alternativeName>
    <alternativeName>
        <fullName>Cellobiase N</fullName>
    </alternativeName>
    <alternativeName>
        <fullName>Gentiobiase N</fullName>
    </alternativeName>
</protein>
<proteinExistence type="inferred from homology"/>
<evidence type="ECO:0000250" key="1"/>
<evidence type="ECO:0000255" key="2"/>
<evidence type="ECO:0000256" key="3">
    <source>
        <dbReference type="SAM" id="MobiDB-lite"/>
    </source>
</evidence>
<evidence type="ECO:0000305" key="4"/>
<sequence>MHSNILPVLTSVATLLGLVQGQSQQPYRDWAKAYEAAETLVLPWTLEQQANISVRDGTAPGFVPFEPSDGVRSVQGSGKDYDNPAMRTSSNLDDRTLHELYLWPWIDGVANGLGSVMCVMNRVNGIIGCENDHIMNGILKNETGFRGFIVPDVTAPVDKAAGLLGGLGWNSGYSVSEIMAAVKNGSIPESVMTEHALRIVATQLNLLQPPEEYAFPVETADLNVRDPSSKDFIRRAGSESIVLLKNKNNTLPLRSPMSLGIFGKDAANLATGPTPQSDFSNFAGDTYDGHLITGGGSYSPAPYVVSPLDALTARAADGQGFGYKYILSDNWTVTPSESTGEGFFQTSGVSVSQYARESEHCLVFINAFGKEGSDRRTLADETGDKLVNDVADYCGSTIVIINNAGVRLVDAWIEHENVTVFTDLIPCSNQVHTNMFCFPGCPERRRSRQESGHAIVDVLFGDVNPSAKLVYTIAKSKDDYNGQICECCECDYTEGLYIDYRHFDQAGIEPRFEFGFGLCFKSDGRANIAAYTTFTHSDLTINPSTDITTLQPYATGPITEGGPSDLFEQILTISASISNTGGVAGAEVAQLYLSFPDAAKAPVRQLRGFEKVYLEPGETKFVSFPIQRRDLSIWDEQTSKWKIVGGKYGVVLGRSSRDFTVEETLELLTI</sequence>
<feature type="signal peptide" evidence="2">
    <location>
        <begin position="1"/>
        <end position="21"/>
    </location>
</feature>
<feature type="chain" id="PRO_0000394911" description="Probable beta-glucosidase N">
    <location>
        <begin position="22"/>
        <end position="670"/>
    </location>
</feature>
<feature type="region of interest" description="Disordered" evidence="3">
    <location>
        <begin position="65"/>
        <end position="87"/>
    </location>
</feature>
<feature type="active site" evidence="1">
    <location>
        <position position="152"/>
    </location>
</feature>
<feature type="glycosylation site" description="N-linked (GlcNAc...) asparagine" evidence="2">
    <location>
        <position position="51"/>
    </location>
</feature>
<feature type="glycosylation site" description="N-linked (GlcNAc...) asparagine" evidence="2">
    <location>
        <position position="141"/>
    </location>
</feature>
<feature type="glycosylation site" description="N-linked (GlcNAc...) asparagine" evidence="2">
    <location>
        <position position="184"/>
    </location>
</feature>
<feature type="glycosylation site" description="N-linked (GlcNAc...) asparagine" evidence="2">
    <location>
        <position position="248"/>
    </location>
</feature>
<feature type="glycosylation site" description="N-linked (GlcNAc...) asparagine" evidence="2">
    <location>
        <position position="330"/>
    </location>
</feature>
<feature type="glycosylation site" description="N-linked (GlcNAc...) asparagine" evidence="2">
    <location>
        <position position="417"/>
    </location>
</feature>
<comment type="function">
    <text evidence="1">Beta-glucosidases are one of a number of cellulolytic enzymes involved in the degradation of cellulosic biomass. Catalyzes the last step releasing glucose from the inhibitory cellobiose (By similarity).</text>
</comment>
<comment type="catalytic activity">
    <reaction>
        <text>Hydrolysis of terminal, non-reducing beta-D-glucosyl residues with release of beta-D-glucose.</text>
        <dbReference type="EC" id="3.2.1.21"/>
    </reaction>
</comment>
<comment type="pathway">
    <text>Glycan metabolism; cellulose degradation.</text>
</comment>
<comment type="subcellular location">
    <subcellularLocation>
        <location evidence="1">Secreted</location>
    </subcellularLocation>
</comment>
<comment type="similarity">
    <text evidence="4">Belongs to the glycosyl hydrolase 3 family.</text>
</comment>